<dbReference type="EMBL" id="BX537845">
    <property type="protein sequence ID" value="CAD97854.1"/>
    <property type="molecule type" value="mRNA"/>
</dbReference>
<dbReference type="EMBL" id="CH236954">
    <property type="protein sequence ID" value="EAL23929.1"/>
    <property type="molecule type" value="Genomic_DNA"/>
</dbReference>
<dbReference type="EMBL" id="BC005878">
    <property type="protein sequence ID" value="AAH05878.2"/>
    <property type="molecule type" value="mRNA"/>
</dbReference>
<dbReference type="EMBL" id="BC020560">
    <property type="protein sequence ID" value="AAH20560.1"/>
    <property type="status" value="ALT_INIT"/>
    <property type="molecule type" value="mRNA"/>
</dbReference>
<dbReference type="EMBL" id="BC043404">
    <property type="protein sequence ID" value="AAH43404.1"/>
    <property type="molecule type" value="mRNA"/>
</dbReference>
<dbReference type="EMBL" id="AK022744">
    <property type="protein sequence ID" value="BAB14219.1"/>
    <property type="status" value="ALT_INIT"/>
    <property type="molecule type" value="mRNA"/>
</dbReference>
<dbReference type="EMBL" id="AK023347">
    <property type="protein sequence ID" value="BAB14534.1"/>
    <property type="status" value="ALT_INIT"/>
    <property type="molecule type" value="mRNA"/>
</dbReference>
<dbReference type="CCDS" id="CCDS43686.1">
    <molecule id="Q86XI2-1"/>
</dbReference>
<dbReference type="CCDS" id="CCDS64816.1">
    <molecule id="Q86XI2-2"/>
</dbReference>
<dbReference type="RefSeq" id="NP_001268861.1">
    <molecule id="Q86XI2-1"/>
    <property type="nucleotide sequence ID" value="NM_001281932.2"/>
</dbReference>
<dbReference type="RefSeq" id="NP_001268862.1">
    <molecule id="Q86XI2-2"/>
    <property type="nucleotide sequence ID" value="NM_001281933.2"/>
</dbReference>
<dbReference type="RefSeq" id="NP_060230.5">
    <molecule id="Q86XI2-1"/>
    <property type="nucleotide sequence ID" value="NM_017760.6"/>
</dbReference>
<dbReference type="RefSeq" id="XP_011514658.1">
    <property type="nucleotide sequence ID" value="XM_011516356.2"/>
</dbReference>
<dbReference type="RefSeq" id="XP_011514659.1">
    <molecule id="Q86XI2-2"/>
    <property type="nucleotide sequence ID" value="XM_011516357.3"/>
</dbReference>
<dbReference type="RefSeq" id="XP_047276494.1">
    <molecule id="Q86XI2-2"/>
    <property type="nucleotide sequence ID" value="XM_047420538.1"/>
</dbReference>
<dbReference type="RefSeq" id="XP_047276495.1">
    <molecule id="Q86XI2-1"/>
    <property type="nucleotide sequence ID" value="XM_047420539.1"/>
</dbReference>
<dbReference type="RefSeq" id="XP_054214493.1">
    <molecule id="Q86XI2-2"/>
    <property type="nucleotide sequence ID" value="XM_054358518.1"/>
</dbReference>
<dbReference type="RefSeq" id="XP_054214494.1">
    <molecule id="Q86XI2-2"/>
    <property type="nucleotide sequence ID" value="XM_054358519.1"/>
</dbReference>
<dbReference type="RefSeq" id="XP_054214495.1">
    <molecule id="Q86XI2-1"/>
    <property type="nucleotide sequence ID" value="XM_054358520.1"/>
</dbReference>
<dbReference type="EMDB" id="EMD-10833"/>
<dbReference type="BioGRID" id="120239">
    <property type="interactions" value="130"/>
</dbReference>
<dbReference type="ComplexPortal" id="CPX-985">
    <property type="entry name" value="Condensin II complex"/>
</dbReference>
<dbReference type="CORUM" id="Q86XI2"/>
<dbReference type="DIP" id="DIP-43902N"/>
<dbReference type="FunCoup" id="Q86XI2">
    <property type="interactions" value="2731"/>
</dbReference>
<dbReference type="IntAct" id="Q86XI2">
    <property type="interactions" value="62"/>
</dbReference>
<dbReference type="MINT" id="Q86XI2"/>
<dbReference type="STRING" id="9606.ENSP00000387007"/>
<dbReference type="GlyGen" id="Q86XI2">
    <property type="glycosylation" value="2 sites, 1 O-linked glycan (2 sites)"/>
</dbReference>
<dbReference type="iPTMnet" id="Q86XI2"/>
<dbReference type="PhosphoSitePlus" id="Q86XI2"/>
<dbReference type="SwissPalm" id="Q86XI2"/>
<dbReference type="BioMuta" id="NCAPG2"/>
<dbReference type="DMDM" id="74727834"/>
<dbReference type="jPOST" id="Q86XI2"/>
<dbReference type="MassIVE" id="Q86XI2"/>
<dbReference type="PaxDb" id="9606-ENSP00000387007"/>
<dbReference type="PeptideAtlas" id="Q86XI2"/>
<dbReference type="ProteomicsDB" id="70279">
    <molecule id="Q86XI2-1"/>
</dbReference>
<dbReference type="ProteomicsDB" id="70280">
    <molecule id="Q86XI2-2"/>
</dbReference>
<dbReference type="Pumba" id="Q86XI2"/>
<dbReference type="Antibodypedia" id="10695">
    <property type="antibodies" value="140 antibodies from 22 providers"/>
</dbReference>
<dbReference type="DNASU" id="54892"/>
<dbReference type="Ensembl" id="ENST00000356309.8">
    <molecule id="Q86XI2-1"/>
    <property type="protein sequence ID" value="ENSP00000348657.3"/>
    <property type="gene ID" value="ENSG00000146918.20"/>
</dbReference>
<dbReference type="Ensembl" id="ENST00000409339.3">
    <molecule id="Q86XI2-2"/>
    <property type="protein sequence ID" value="ENSP00000387007.3"/>
    <property type="gene ID" value="ENSG00000146918.20"/>
</dbReference>
<dbReference type="Ensembl" id="ENST00000409423.5">
    <molecule id="Q86XI2-1"/>
    <property type="protein sequence ID" value="ENSP00000386569.1"/>
    <property type="gene ID" value="ENSG00000146918.20"/>
</dbReference>
<dbReference type="GeneID" id="54892"/>
<dbReference type="KEGG" id="hsa:54892"/>
<dbReference type="MANE-Select" id="ENST00000356309.8">
    <property type="protein sequence ID" value="ENSP00000348657.3"/>
    <property type="RefSeq nucleotide sequence ID" value="NM_017760.7"/>
    <property type="RefSeq protein sequence ID" value="NP_060230.5"/>
</dbReference>
<dbReference type="UCSC" id="uc003wnv.3">
    <molecule id="Q86XI2-1"/>
    <property type="organism name" value="human"/>
</dbReference>
<dbReference type="AGR" id="HGNC:21904"/>
<dbReference type="CTD" id="54892"/>
<dbReference type="DisGeNET" id="54892"/>
<dbReference type="GeneCards" id="NCAPG2"/>
<dbReference type="HGNC" id="HGNC:21904">
    <property type="gene designation" value="NCAPG2"/>
</dbReference>
<dbReference type="HPA" id="ENSG00000146918">
    <property type="expression patterns" value="Tissue enhanced (bone marrow, lymphoid tissue)"/>
</dbReference>
<dbReference type="MalaCards" id="NCAPG2"/>
<dbReference type="MIM" id="608532">
    <property type="type" value="gene"/>
</dbReference>
<dbReference type="MIM" id="618460">
    <property type="type" value="phenotype"/>
</dbReference>
<dbReference type="neXtProt" id="NX_Q86XI2"/>
<dbReference type="OpenTargets" id="ENSG00000146918"/>
<dbReference type="PharmGKB" id="PA162397212"/>
<dbReference type="VEuPathDB" id="HostDB:ENSG00000146918"/>
<dbReference type="eggNOG" id="KOG1949">
    <property type="taxonomic scope" value="Eukaryota"/>
</dbReference>
<dbReference type="GeneTree" id="ENSGT00490000043432"/>
<dbReference type="InParanoid" id="Q86XI2"/>
<dbReference type="OMA" id="FMHHGVH"/>
<dbReference type="OrthoDB" id="10062843at2759"/>
<dbReference type="PAN-GO" id="Q86XI2">
    <property type="GO annotations" value="3 GO annotations based on evolutionary models"/>
</dbReference>
<dbReference type="PhylomeDB" id="Q86XI2"/>
<dbReference type="TreeFam" id="TF101163"/>
<dbReference type="PathwayCommons" id="Q86XI2"/>
<dbReference type="Reactome" id="R-HSA-2299718">
    <property type="pathway name" value="Condensation of Prophase Chromosomes"/>
</dbReference>
<dbReference type="SignaLink" id="Q86XI2"/>
<dbReference type="SIGNOR" id="Q86XI2"/>
<dbReference type="BioGRID-ORCS" id="54892">
    <property type="hits" value="686 hits in 1174 CRISPR screens"/>
</dbReference>
<dbReference type="CD-CODE" id="91857CE7">
    <property type="entry name" value="Nucleolus"/>
</dbReference>
<dbReference type="ChiTaRS" id="NCAPG2">
    <property type="organism name" value="human"/>
</dbReference>
<dbReference type="GeneWiki" id="NCAPG2"/>
<dbReference type="GenomeRNAi" id="54892"/>
<dbReference type="Pharos" id="Q86XI2">
    <property type="development level" value="Tbio"/>
</dbReference>
<dbReference type="PRO" id="PR:Q86XI2"/>
<dbReference type="Proteomes" id="UP000005640">
    <property type="component" value="Chromosome 7"/>
</dbReference>
<dbReference type="RNAct" id="Q86XI2">
    <property type="molecule type" value="protein"/>
</dbReference>
<dbReference type="Bgee" id="ENSG00000146918">
    <property type="expression patterns" value="Expressed in ventricular zone and 141 other cell types or tissues"/>
</dbReference>
<dbReference type="ExpressionAtlas" id="Q86XI2">
    <property type="expression patterns" value="baseline and differential"/>
</dbReference>
<dbReference type="GO" id="GO:0000794">
    <property type="term" value="C:condensed nuclear chromosome"/>
    <property type="evidence" value="ECO:0000266"/>
    <property type="project" value="ComplexPortal"/>
</dbReference>
<dbReference type="GO" id="GO:0000796">
    <property type="term" value="C:condensin complex"/>
    <property type="evidence" value="ECO:0000318"/>
    <property type="project" value="GO_Central"/>
</dbReference>
<dbReference type="GO" id="GO:0016020">
    <property type="term" value="C:membrane"/>
    <property type="evidence" value="ECO:0007005"/>
    <property type="project" value="UniProtKB"/>
</dbReference>
<dbReference type="GO" id="GO:0016607">
    <property type="term" value="C:nuclear speck"/>
    <property type="evidence" value="ECO:0000314"/>
    <property type="project" value="HPA"/>
</dbReference>
<dbReference type="GO" id="GO:0005654">
    <property type="term" value="C:nucleoplasm"/>
    <property type="evidence" value="ECO:0000314"/>
    <property type="project" value="HPA"/>
</dbReference>
<dbReference type="GO" id="GO:0005634">
    <property type="term" value="C:nucleus"/>
    <property type="evidence" value="ECO:0000318"/>
    <property type="project" value="GO_Central"/>
</dbReference>
<dbReference type="GO" id="GO:0043425">
    <property type="term" value="F:bHLH transcription factor binding"/>
    <property type="evidence" value="ECO:0007669"/>
    <property type="project" value="Ensembl"/>
</dbReference>
<dbReference type="GO" id="GO:0140117">
    <property type="term" value="F:histone H4K20me1 reader activity"/>
    <property type="evidence" value="ECO:0000314"/>
    <property type="project" value="GO_Central"/>
</dbReference>
<dbReference type="GO" id="GO:0051301">
    <property type="term" value="P:cell division"/>
    <property type="evidence" value="ECO:0007669"/>
    <property type="project" value="UniProtKB-KW"/>
</dbReference>
<dbReference type="GO" id="GO:0030261">
    <property type="term" value="P:chromosome condensation"/>
    <property type="evidence" value="ECO:0007669"/>
    <property type="project" value="UniProtKB-KW"/>
</dbReference>
<dbReference type="GO" id="GO:0030218">
    <property type="term" value="P:erythrocyte differentiation"/>
    <property type="evidence" value="ECO:0007669"/>
    <property type="project" value="Ensembl"/>
</dbReference>
<dbReference type="GO" id="GO:0001833">
    <property type="term" value="P:inner cell mass cell proliferation"/>
    <property type="evidence" value="ECO:0007669"/>
    <property type="project" value="Ensembl"/>
</dbReference>
<dbReference type="GO" id="GO:0000070">
    <property type="term" value="P:mitotic sister chromatid segregation"/>
    <property type="evidence" value="ECO:0000318"/>
    <property type="project" value="GO_Central"/>
</dbReference>
<dbReference type="GO" id="GO:1905821">
    <property type="term" value="P:positive regulation of chromosome condensation"/>
    <property type="evidence" value="ECO:0000250"/>
    <property type="project" value="ComplexPortal"/>
</dbReference>
<dbReference type="GO" id="GO:0051984">
    <property type="term" value="P:positive regulation of chromosome segregation"/>
    <property type="evidence" value="ECO:0000266"/>
    <property type="project" value="ComplexPortal"/>
</dbReference>
<dbReference type="GO" id="GO:1905820">
    <property type="term" value="P:positive regulation of chromosome separation"/>
    <property type="evidence" value="ECO:0000266"/>
    <property type="project" value="ComplexPortal"/>
</dbReference>
<dbReference type="GO" id="GO:0006366">
    <property type="term" value="P:transcription by RNA polymerase II"/>
    <property type="evidence" value="ECO:0007669"/>
    <property type="project" value="Ensembl"/>
</dbReference>
<dbReference type="FunFam" id="1.25.10.10:FF:000238">
    <property type="entry name" value="Non-SMC condensin II complex subunit G2"/>
    <property type="match status" value="1"/>
</dbReference>
<dbReference type="Gene3D" id="1.25.10.10">
    <property type="entry name" value="Leucine-rich Repeat Variant"/>
    <property type="match status" value="1"/>
</dbReference>
<dbReference type="InterPro" id="IPR011989">
    <property type="entry name" value="ARM-like"/>
</dbReference>
<dbReference type="InterPro" id="IPR016024">
    <property type="entry name" value="ARM-type_fold"/>
</dbReference>
<dbReference type="InterPro" id="IPR024741">
    <property type="entry name" value="Condensin2_G2"/>
</dbReference>
<dbReference type="PANTHER" id="PTHR16199">
    <property type="entry name" value="CONDENSIN-2 COMPLEX SUBUNIT G2"/>
    <property type="match status" value="1"/>
</dbReference>
<dbReference type="PANTHER" id="PTHR16199:SF4">
    <property type="entry name" value="CONDENSIN-2 COMPLEX SUBUNIT G2"/>
    <property type="match status" value="1"/>
</dbReference>
<dbReference type="Pfam" id="PF12422">
    <property type="entry name" value="Condensin2nSMC"/>
    <property type="match status" value="1"/>
</dbReference>
<dbReference type="SUPFAM" id="SSF48371">
    <property type="entry name" value="ARM repeat"/>
    <property type="match status" value="1"/>
</dbReference>
<keyword id="KW-0025">Alternative splicing</keyword>
<keyword id="KW-0131">Cell cycle</keyword>
<keyword id="KW-0132">Cell division</keyword>
<keyword id="KW-0225">Disease variant</keyword>
<keyword id="KW-0226">DNA condensation</keyword>
<keyword id="KW-0498">Mitosis</keyword>
<keyword id="KW-0539">Nucleus</keyword>
<keyword id="KW-0597">Phosphoprotein</keyword>
<keyword id="KW-1267">Proteomics identification</keyword>
<keyword id="KW-1185">Reference proteome</keyword>
<feature type="chain" id="PRO_0000255942" description="Condensin-2 complex subunit G2">
    <location>
        <begin position="1"/>
        <end position="1143"/>
    </location>
</feature>
<feature type="repeat" description="HEAT">
    <location>
        <begin position="460"/>
        <end position="498"/>
    </location>
</feature>
<feature type="modified residue" description="Phosphoserine" evidence="6 7">
    <location>
        <position position="30"/>
    </location>
</feature>
<feature type="modified residue" description="Phosphothreonine" evidence="5 7 8">
    <location>
        <position position="805"/>
    </location>
</feature>
<feature type="modified residue" description="Phosphothreonine" evidence="5">
    <location>
        <position position="1119"/>
    </location>
</feature>
<feature type="splice variant" id="VSP_021311" description="In isoform 2." evidence="3">
    <original>FLYESSSRTLGELLNS</original>
    <variation>YEDLLCCPGWALTPGLLDSIYPSASVPIG</variation>
    <location>
        <begin position="1128"/>
        <end position="1143"/>
    </location>
</feature>
<feature type="sequence variant" id="VAR_083028" description="In 3KS; leads to defects in mitotic chromosome compaction and organization; increases the number of micronuclei; increases cell death; dbSNP:rs1299537743." evidence="2">
    <original>K</original>
    <variation>E</variation>
    <location>
        <position position="609"/>
    </location>
</feature>
<feature type="sequence variant" id="VAR_083029" description="In 3KS; leads to defects in mitotic chromosome compaction and organization; increases the number of micronuclei; increases cell death; dbSNP:rs772209292." evidence="2">
    <original>T</original>
    <variation>M</variation>
    <location>
        <position position="693"/>
    </location>
</feature>
<feature type="sequence variant" id="VAR_053046" description="In dbSNP:rs10248318.">
    <original>T</original>
    <variation>M</variation>
    <location>
        <position position="794"/>
    </location>
</feature>
<feature type="sequence variant" id="VAR_083030" description="In 3KS; dbSNP:rs1563515856." evidence="2">
    <original>T</original>
    <variation>P</variation>
    <location>
        <position position="850"/>
    </location>
</feature>
<feature type="sequence variant" id="VAR_053047" description="In dbSNP:rs3214000.">
    <original>E</original>
    <variation>D</variation>
    <location>
        <position position="867"/>
    </location>
</feature>
<feature type="sequence conflict" description="In Ref. 4; BAB14219." evidence="4" ref="4">
    <original>E</original>
    <variation>G</variation>
    <location>
        <position position="369"/>
    </location>
</feature>
<evidence type="ECO:0000269" key="1">
    <source>
    </source>
</evidence>
<evidence type="ECO:0000269" key="2">
    <source>
    </source>
</evidence>
<evidence type="ECO:0000303" key="3">
    <source>
    </source>
</evidence>
<evidence type="ECO:0000305" key="4"/>
<evidence type="ECO:0007744" key="5">
    <source>
    </source>
</evidence>
<evidence type="ECO:0007744" key="6">
    <source>
    </source>
</evidence>
<evidence type="ECO:0007744" key="7">
    <source>
    </source>
</evidence>
<evidence type="ECO:0007744" key="8">
    <source>
    </source>
</evidence>
<comment type="function">
    <text evidence="1 2">Regulatory subunit of the condensin-2 complex, a complex which establishes mitotic chromosome architecture and is involved in physical rigidity of the chromatid axis.</text>
</comment>
<comment type="subunit">
    <text evidence="1">Component of the condensin-2 complex, which contains the SMC2 and SMC4 heterodimer, and 3 non SMC subunits that probably regulate the complex: NCAPH2, NCAPD3 and NCAPG2.</text>
</comment>
<comment type="interaction">
    <interactant intactId="EBI-1047404">
        <id>Q86XI2</id>
    </interactant>
    <interactant intactId="EBI-2548296">
        <id>Q6IBW4</id>
        <label>NCAPH2</label>
    </interactant>
    <organismsDiffer>false</organismsDiffer>
    <experiments>5</experiments>
</comment>
<comment type="subcellular location">
    <subcellularLocation>
        <location evidence="1">Nucleus</location>
    </subcellularLocation>
</comment>
<comment type="alternative products">
    <event type="alternative splicing"/>
    <isoform>
        <id>Q86XI2-1</id>
        <name>1</name>
        <sequence type="displayed"/>
    </isoform>
    <isoform>
        <id>Q86XI2-2</id>
        <name>2</name>
        <sequence type="described" ref="VSP_021311"/>
    </isoform>
</comment>
<comment type="disease" evidence="2">
    <disease id="DI-05588">
        <name>Khan-Khan-Katsanis syndrome</name>
        <acronym>3KS</acronym>
        <description>An autosomal recessive neurodevelopmental disorder characterized by multiple congenital anomalies affecting the ocular, renal, skeletal, and sometimes cardiac systems, defects in urogenital and limb morphogenesis, poor overall growth, microcephaly, and global developmental delay.</description>
        <dbReference type="MIM" id="618460"/>
    </disease>
    <text>The disease is caused by variants affecting the gene represented in this entry.</text>
</comment>
<comment type="sequence caution" evidence="4">
    <conflict type="erroneous initiation">
        <sequence resource="EMBL-CDS" id="AAH20560"/>
    </conflict>
</comment>
<comment type="sequence caution" evidence="4">
    <conflict type="erroneous initiation">
        <sequence resource="EMBL-CDS" id="BAB14219"/>
    </conflict>
</comment>
<comment type="sequence caution" evidence="4">
    <conflict type="erroneous initiation">
        <sequence resource="EMBL-CDS" id="BAB14534"/>
    </conflict>
</comment>
<gene>
    <name type="primary">NCAPG2</name>
    <name type="synonym">LUZP5</name>
</gene>
<protein>
    <recommendedName>
        <fullName>Condensin-2 complex subunit G2</fullName>
    </recommendedName>
    <alternativeName>
        <fullName>Chromosome-associated protein G2</fullName>
        <shortName>CAP-G2</shortName>
        <shortName>hCAP-G2</shortName>
    </alternativeName>
    <alternativeName>
        <fullName>Leucine zipper protein 5</fullName>
    </alternativeName>
    <alternativeName>
        <fullName>Non-SMC condensin II complex subunit G2</fullName>
    </alternativeName>
</protein>
<name>CNDG2_HUMAN</name>
<organism>
    <name type="scientific">Homo sapiens</name>
    <name type="common">Human</name>
    <dbReference type="NCBI Taxonomy" id="9606"/>
    <lineage>
        <taxon>Eukaryota</taxon>
        <taxon>Metazoa</taxon>
        <taxon>Chordata</taxon>
        <taxon>Craniata</taxon>
        <taxon>Vertebrata</taxon>
        <taxon>Euteleostomi</taxon>
        <taxon>Mammalia</taxon>
        <taxon>Eutheria</taxon>
        <taxon>Euarchontoglires</taxon>
        <taxon>Primates</taxon>
        <taxon>Haplorrhini</taxon>
        <taxon>Catarrhini</taxon>
        <taxon>Hominidae</taxon>
        <taxon>Homo</taxon>
    </lineage>
</organism>
<sequence length="1143" mass="130960">MEKRETFVQAVSKELVGEFLQFVQLDKEASDPFSLNELLDELSRKQKEELWQRLKNLLTDVLLESPVDGWQVVEAQGEDNMETEHGSKMRKSIEIIYAITSVILASVSVINESENYEALLECVIILNGILYALPESERKLQSSIQDLCVTWWEKGLPAKEDTGKTAFVMLLRRSLETKTGADVCRLWRIHQALYCFDYDLEESGEIKDMLLECFININYIKKEEGRRFLSCLFNWNINFIKMIHGTIKNQLQGLQKSLMVYIAEIYFRAWKKASGKILEAIENDCIQDFMFHGIHLPRRSPVHSKVREVLSYFHHQKKVRQGVEEMLYRLYKPILWRGLKARNSEVRSNAALLFVEAFPIRDPNLHAIEMDSEIQKQFEELYSLLEDPYPMVRSTGILGVCKITSKYWEMMPPTILIDLLKKVTGELAFDTSSADVRCSVFKCLPMILDNKLSHPLLEQLLPALRYSLHDNSEKVRVAFVDMLLKIKAVRAAKFWKICPMEHILVRLETDSRPVSRRLVSLIFNSFLPVNQPEEVWCERCVTLVQMNHAAARRFYQYAHEHTACTNIAKLIHVIRHCLNACIQRAVREPPEDEEEEDGREKENVTVLDKTLSVNDVACMAGLLEIIVILWKSIDRSMENNKEAKLYTINKFASVLPEYLKVFKDDRCKIPLFMLMSFMPASAVPPFSCGVISTLRSREEGAVDKSYCTLLDCLCSWGQVGHILELVDNWLPTEHAQAKSNTASKGRVQIHDTRPVKPELALVYIEYLLTHPKNRECLLSAPRKKLNHLLKALETSKADLESLLQTPGGKPRGFSEAAAPRAFGLHCRLSIHLQHKFCSEGKVYLSMLEDTGFWLESKILSFIQDQEEDYLKLHRVIYQQIIQTYLTVCKDVVMVGLGDHQFQMQLLQRSLGIMQTVKGFFYVSLLLDILKEITGSSLIQKTDSDEEVAMLLDTVQKVFQKMLECIARSFRKQPEEGLRLLYSVQRPLHEFITAVQSRHTDTPVHRGVLSTLIAGPVVEISHQLRKVSDVEELTPPEHLSDLPPFSRCLIGIIIKSSNVVRSFLDELKACVASNDIEGIVCLTAAVHIILVINAGKHKSSKVREVAATVHRKLKTFMEITLEEDSIERFLYESSSRTLGELLNS</sequence>
<accession>Q86XI2</accession>
<accession>A4D228</accession>
<accession>Q7Z3J9</accession>
<accession>Q8WUG8</accession>
<accession>Q9BRX6</accession>
<accession>Q9H8S2</accession>
<accession>Q9H9K6</accession>
<proteinExistence type="evidence at protein level"/>
<reference key="1">
    <citation type="journal article" date="2007" name="BMC Genomics">
        <title>The full-ORF clone resource of the German cDNA consortium.</title>
        <authorList>
            <person name="Bechtel S."/>
            <person name="Rosenfelder H."/>
            <person name="Duda A."/>
            <person name="Schmidt C.P."/>
            <person name="Ernst U."/>
            <person name="Wellenreuther R."/>
            <person name="Mehrle A."/>
            <person name="Schuster C."/>
            <person name="Bahr A."/>
            <person name="Bloecker H."/>
            <person name="Heubner D."/>
            <person name="Hoerlein A."/>
            <person name="Michel G."/>
            <person name="Wedler H."/>
            <person name="Koehrer K."/>
            <person name="Ottenwaelder B."/>
            <person name="Poustka A."/>
            <person name="Wiemann S."/>
            <person name="Schupp I."/>
        </authorList>
    </citation>
    <scope>NUCLEOTIDE SEQUENCE [LARGE SCALE MRNA] (ISOFORM 2)</scope>
    <source>
        <tissue>Endometrium</tissue>
    </source>
</reference>
<reference key="2">
    <citation type="journal article" date="2003" name="Science">
        <title>Human chromosome 7: DNA sequence and biology.</title>
        <authorList>
            <person name="Scherer S.W."/>
            <person name="Cheung J."/>
            <person name="MacDonald J.R."/>
            <person name="Osborne L.R."/>
            <person name="Nakabayashi K."/>
            <person name="Herbrick J.-A."/>
            <person name="Carson A.R."/>
            <person name="Parker-Katiraee L."/>
            <person name="Skaug J."/>
            <person name="Khaja R."/>
            <person name="Zhang J."/>
            <person name="Hudek A.K."/>
            <person name="Li M."/>
            <person name="Haddad M."/>
            <person name="Duggan G.E."/>
            <person name="Fernandez B.A."/>
            <person name="Kanematsu E."/>
            <person name="Gentles S."/>
            <person name="Christopoulos C.C."/>
            <person name="Choufani S."/>
            <person name="Kwasnicka D."/>
            <person name="Zheng X.H."/>
            <person name="Lai Z."/>
            <person name="Nusskern D.R."/>
            <person name="Zhang Q."/>
            <person name="Gu Z."/>
            <person name="Lu F."/>
            <person name="Zeesman S."/>
            <person name="Nowaczyk M.J."/>
            <person name="Teshima I."/>
            <person name="Chitayat D."/>
            <person name="Shuman C."/>
            <person name="Weksberg R."/>
            <person name="Zackai E.H."/>
            <person name="Grebe T.A."/>
            <person name="Cox S.R."/>
            <person name="Kirkpatrick S.J."/>
            <person name="Rahman N."/>
            <person name="Friedman J.M."/>
            <person name="Heng H.H.Q."/>
            <person name="Pelicci P.G."/>
            <person name="Lo-Coco F."/>
            <person name="Belloni E."/>
            <person name="Shaffer L.G."/>
            <person name="Pober B."/>
            <person name="Morton C.C."/>
            <person name="Gusella J.F."/>
            <person name="Bruns G.A.P."/>
            <person name="Korf B.R."/>
            <person name="Quade B.J."/>
            <person name="Ligon A.H."/>
            <person name="Ferguson H."/>
            <person name="Higgins A.W."/>
            <person name="Leach N.T."/>
            <person name="Herrick S.R."/>
            <person name="Lemyre E."/>
            <person name="Farra C.G."/>
            <person name="Kim H.-G."/>
            <person name="Summers A.M."/>
            <person name="Gripp K.W."/>
            <person name="Roberts W."/>
            <person name="Szatmari P."/>
            <person name="Winsor E.J.T."/>
            <person name="Grzeschik K.-H."/>
            <person name="Teebi A."/>
            <person name="Minassian B.A."/>
            <person name="Kere J."/>
            <person name="Armengol L."/>
            <person name="Pujana M.A."/>
            <person name="Estivill X."/>
            <person name="Wilson M.D."/>
            <person name="Koop B.F."/>
            <person name="Tosi S."/>
            <person name="Moore G.E."/>
            <person name="Boright A.P."/>
            <person name="Zlotorynski E."/>
            <person name="Kerem B."/>
            <person name="Kroisel P.M."/>
            <person name="Petek E."/>
            <person name="Oscier D.G."/>
            <person name="Mould S.J."/>
            <person name="Doehner H."/>
            <person name="Doehner K."/>
            <person name="Rommens J.M."/>
            <person name="Vincent J.B."/>
            <person name="Venter J.C."/>
            <person name="Li P.W."/>
            <person name="Mural R.J."/>
            <person name="Adams M.D."/>
            <person name="Tsui L.-C."/>
        </authorList>
    </citation>
    <scope>NUCLEOTIDE SEQUENCE [LARGE SCALE GENOMIC DNA]</scope>
</reference>
<reference key="3">
    <citation type="journal article" date="2004" name="Genome Res.">
        <title>The status, quality, and expansion of the NIH full-length cDNA project: the Mammalian Gene Collection (MGC).</title>
        <authorList>
            <consortium name="The MGC Project Team"/>
        </authorList>
    </citation>
    <scope>NUCLEOTIDE SEQUENCE [LARGE SCALE MRNA] (ISOFORM 1)</scope>
    <source>
        <tissue>Testis</tissue>
    </source>
</reference>
<reference key="4">
    <citation type="journal article" date="2004" name="Nat. Genet.">
        <title>Complete sequencing and characterization of 21,243 full-length human cDNAs.</title>
        <authorList>
            <person name="Ota T."/>
            <person name="Suzuki Y."/>
            <person name="Nishikawa T."/>
            <person name="Otsuki T."/>
            <person name="Sugiyama T."/>
            <person name="Irie R."/>
            <person name="Wakamatsu A."/>
            <person name="Hayashi K."/>
            <person name="Sato H."/>
            <person name="Nagai K."/>
            <person name="Kimura K."/>
            <person name="Makita H."/>
            <person name="Sekine M."/>
            <person name="Obayashi M."/>
            <person name="Nishi T."/>
            <person name="Shibahara T."/>
            <person name="Tanaka T."/>
            <person name="Ishii S."/>
            <person name="Yamamoto J."/>
            <person name="Saito K."/>
            <person name="Kawai Y."/>
            <person name="Isono Y."/>
            <person name="Nakamura Y."/>
            <person name="Nagahari K."/>
            <person name="Murakami K."/>
            <person name="Yasuda T."/>
            <person name="Iwayanagi T."/>
            <person name="Wagatsuma M."/>
            <person name="Shiratori A."/>
            <person name="Sudo H."/>
            <person name="Hosoiri T."/>
            <person name="Kaku Y."/>
            <person name="Kodaira H."/>
            <person name="Kondo H."/>
            <person name="Sugawara M."/>
            <person name="Takahashi M."/>
            <person name="Kanda K."/>
            <person name="Yokoi T."/>
            <person name="Furuya T."/>
            <person name="Kikkawa E."/>
            <person name="Omura Y."/>
            <person name="Abe K."/>
            <person name="Kamihara K."/>
            <person name="Katsuta N."/>
            <person name="Sato K."/>
            <person name="Tanikawa M."/>
            <person name="Yamazaki M."/>
            <person name="Ninomiya K."/>
            <person name="Ishibashi T."/>
            <person name="Yamashita H."/>
            <person name="Murakawa K."/>
            <person name="Fujimori K."/>
            <person name="Tanai H."/>
            <person name="Kimata M."/>
            <person name="Watanabe M."/>
            <person name="Hiraoka S."/>
            <person name="Chiba Y."/>
            <person name="Ishida S."/>
            <person name="Ono Y."/>
            <person name="Takiguchi S."/>
            <person name="Watanabe S."/>
            <person name="Yosida M."/>
            <person name="Hotuta T."/>
            <person name="Kusano J."/>
            <person name="Kanehori K."/>
            <person name="Takahashi-Fujii A."/>
            <person name="Hara H."/>
            <person name="Tanase T.-O."/>
            <person name="Nomura Y."/>
            <person name="Togiya S."/>
            <person name="Komai F."/>
            <person name="Hara R."/>
            <person name="Takeuchi K."/>
            <person name="Arita M."/>
            <person name="Imose N."/>
            <person name="Musashino K."/>
            <person name="Yuuki H."/>
            <person name="Oshima A."/>
            <person name="Sasaki N."/>
            <person name="Aotsuka S."/>
            <person name="Yoshikawa Y."/>
            <person name="Matsunawa H."/>
            <person name="Ichihara T."/>
            <person name="Shiohata N."/>
            <person name="Sano S."/>
            <person name="Moriya S."/>
            <person name="Momiyama H."/>
            <person name="Satoh N."/>
            <person name="Takami S."/>
            <person name="Terashima Y."/>
            <person name="Suzuki O."/>
            <person name="Nakagawa S."/>
            <person name="Senoh A."/>
            <person name="Mizoguchi H."/>
            <person name="Goto Y."/>
            <person name="Shimizu F."/>
            <person name="Wakebe H."/>
            <person name="Hishigaki H."/>
            <person name="Watanabe T."/>
            <person name="Sugiyama A."/>
            <person name="Takemoto M."/>
            <person name="Kawakami B."/>
            <person name="Yamazaki M."/>
            <person name="Watanabe K."/>
            <person name="Kumagai A."/>
            <person name="Itakura S."/>
            <person name="Fukuzumi Y."/>
            <person name="Fujimori Y."/>
            <person name="Komiyama M."/>
            <person name="Tashiro H."/>
            <person name="Tanigami A."/>
            <person name="Fujiwara T."/>
            <person name="Ono T."/>
            <person name="Yamada K."/>
            <person name="Fujii Y."/>
            <person name="Ozaki K."/>
            <person name="Hirao M."/>
            <person name="Ohmori Y."/>
            <person name="Kawabata A."/>
            <person name="Hikiji T."/>
            <person name="Kobatake N."/>
            <person name="Inagaki H."/>
            <person name="Ikema Y."/>
            <person name="Okamoto S."/>
            <person name="Okitani R."/>
            <person name="Kawakami T."/>
            <person name="Noguchi S."/>
            <person name="Itoh T."/>
            <person name="Shigeta K."/>
            <person name="Senba T."/>
            <person name="Matsumura K."/>
            <person name="Nakajima Y."/>
            <person name="Mizuno T."/>
            <person name="Morinaga M."/>
            <person name="Sasaki M."/>
            <person name="Togashi T."/>
            <person name="Oyama M."/>
            <person name="Hata H."/>
            <person name="Watanabe M."/>
            <person name="Komatsu T."/>
            <person name="Mizushima-Sugano J."/>
            <person name="Satoh T."/>
            <person name="Shirai Y."/>
            <person name="Takahashi Y."/>
            <person name="Nakagawa K."/>
            <person name="Okumura K."/>
            <person name="Nagase T."/>
            <person name="Nomura N."/>
            <person name="Kikuchi H."/>
            <person name="Masuho Y."/>
            <person name="Yamashita R."/>
            <person name="Nakai K."/>
            <person name="Yada T."/>
            <person name="Nakamura Y."/>
            <person name="Ohara O."/>
            <person name="Isogai T."/>
            <person name="Sugano S."/>
        </authorList>
    </citation>
    <scope>NUCLEOTIDE SEQUENCE [LARGE SCALE MRNA] OF 352-1143</scope>
    <source>
        <tissue>Ovary</tissue>
    </source>
</reference>
<reference key="5">
    <citation type="journal article" date="2003" name="Cell">
        <title>Differential contributions of condensin I and condensin II to mitotic chromosome architecture in vertebrate cells.</title>
        <authorList>
            <person name="Ono T."/>
            <person name="Losada A."/>
            <person name="Hirano M."/>
            <person name="Myers M.P."/>
            <person name="Neuwald A.F."/>
            <person name="Hirano T."/>
        </authorList>
    </citation>
    <scope>IDENTIFICATION BY MASS SPECTROMETRY</scope>
    <scope>IDENTIFICATION IN THE CONDENSIN-II COMPLEX</scope>
    <scope>FUNCTION</scope>
    <scope>SUBCELLULAR LOCATION</scope>
</reference>
<reference key="6">
    <citation type="journal article" date="2008" name="Mol. Cell">
        <title>Kinase-selective enrichment enables quantitative phosphoproteomics of the kinome across the cell cycle.</title>
        <authorList>
            <person name="Daub H."/>
            <person name="Olsen J.V."/>
            <person name="Bairlein M."/>
            <person name="Gnad F."/>
            <person name="Oppermann F.S."/>
            <person name="Korner R."/>
            <person name="Greff Z."/>
            <person name="Keri G."/>
            <person name="Stemmann O."/>
            <person name="Mann M."/>
        </authorList>
    </citation>
    <scope>PHOSPHORYLATION [LARGE SCALE ANALYSIS] AT SER-30</scope>
    <scope>IDENTIFICATION BY MASS SPECTROMETRY [LARGE SCALE ANALYSIS]</scope>
    <source>
        <tissue>Cervix carcinoma</tissue>
    </source>
</reference>
<reference key="7">
    <citation type="journal article" date="2008" name="Proc. Natl. Acad. Sci. U.S.A.">
        <title>A quantitative atlas of mitotic phosphorylation.</title>
        <authorList>
            <person name="Dephoure N."/>
            <person name="Zhou C."/>
            <person name="Villen J."/>
            <person name="Beausoleil S.A."/>
            <person name="Bakalarski C.E."/>
            <person name="Elledge S.J."/>
            <person name="Gygi S.P."/>
        </authorList>
    </citation>
    <scope>PHOSPHORYLATION [LARGE SCALE ANALYSIS] AT THR-805 AND THR-1119</scope>
    <scope>IDENTIFICATION BY MASS SPECTROMETRY [LARGE SCALE ANALYSIS]</scope>
    <source>
        <tissue>Cervix carcinoma</tissue>
    </source>
</reference>
<reference key="8">
    <citation type="journal article" date="2010" name="Sci. Signal.">
        <title>Quantitative phosphoproteomics reveals widespread full phosphorylation site occupancy during mitosis.</title>
        <authorList>
            <person name="Olsen J.V."/>
            <person name="Vermeulen M."/>
            <person name="Santamaria A."/>
            <person name="Kumar C."/>
            <person name="Miller M.L."/>
            <person name="Jensen L.J."/>
            <person name="Gnad F."/>
            <person name="Cox J."/>
            <person name="Jensen T.S."/>
            <person name="Nigg E.A."/>
            <person name="Brunak S."/>
            <person name="Mann M."/>
        </authorList>
    </citation>
    <scope>PHOSPHORYLATION [LARGE SCALE ANALYSIS] AT SER-30 AND THR-805</scope>
    <scope>IDENTIFICATION BY MASS SPECTROMETRY [LARGE SCALE ANALYSIS]</scope>
    <source>
        <tissue>Cervix carcinoma</tissue>
    </source>
</reference>
<reference key="9">
    <citation type="journal article" date="2011" name="BMC Syst. Biol.">
        <title>Initial characterization of the human central proteome.</title>
        <authorList>
            <person name="Burkard T.R."/>
            <person name="Planyavsky M."/>
            <person name="Kaupe I."/>
            <person name="Breitwieser F.P."/>
            <person name="Buerckstuemmer T."/>
            <person name="Bennett K.L."/>
            <person name="Superti-Furga G."/>
            <person name="Colinge J."/>
        </authorList>
    </citation>
    <scope>IDENTIFICATION BY MASS SPECTROMETRY [LARGE SCALE ANALYSIS]</scope>
</reference>
<reference key="10">
    <citation type="journal article" date="2013" name="J. Proteome Res.">
        <title>Toward a comprehensive characterization of a human cancer cell phosphoproteome.</title>
        <authorList>
            <person name="Zhou H."/>
            <person name="Di Palma S."/>
            <person name="Preisinger C."/>
            <person name="Peng M."/>
            <person name="Polat A.N."/>
            <person name="Heck A.J."/>
            <person name="Mohammed S."/>
        </authorList>
    </citation>
    <scope>PHOSPHORYLATION [LARGE SCALE ANALYSIS] AT THR-805</scope>
    <scope>IDENTIFICATION BY MASS SPECTROMETRY [LARGE SCALE ANALYSIS]</scope>
    <source>
        <tissue>Cervix carcinoma</tissue>
    </source>
</reference>
<reference key="11">
    <citation type="journal article" date="2019" name="Am. J. Hum. Genet.">
        <title>Mutations in NCAPG2 Cause a Severe Neurodevelopmental Syndrome that Expands the Phenotypic Spectrum of Condensinopathies.</title>
        <authorList>
            <consortium name="Task Force for Neonatal Genomics"/>
            <person name="Khan T.N."/>
            <person name="Khan K."/>
            <person name="Sadeghpour A."/>
            <person name="Reynolds H."/>
            <person name="Perilla Y."/>
            <person name="McDonald M.T."/>
            <person name="Gallentine W.B."/>
            <person name="Baig S.M."/>
            <person name="Davis E.E."/>
            <person name="Katsanis N."/>
        </authorList>
    </citation>
    <scope>INVOLVEMENT IN 3KS</scope>
    <scope>VARIANTS 3KS GLU-609; MET-693 AND PRO-850</scope>
    <scope>CHARACTERIZATION OF VARIANTS 3KS GLU-609 AND MET-693</scope>
    <scope>FUNCTION</scope>
</reference>